<accession>B8I551</accession>
<reference key="1">
    <citation type="submission" date="2009-01" db="EMBL/GenBank/DDBJ databases">
        <title>Complete sequence of Clostridium cellulolyticum H10.</title>
        <authorList>
            <consortium name="US DOE Joint Genome Institute"/>
            <person name="Lucas S."/>
            <person name="Copeland A."/>
            <person name="Lapidus A."/>
            <person name="Glavina del Rio T."/>
            <person name="Dalin E."/>
            <person name="Tice H."/>
            <person name="Bruce D."/>
            <person name="Goodwin L."/>
            <person name="Pitluck S."/>
            <person name="Chertkov O."/>
            <person name="Saunders E."/>
            <person name="Brettin T."/>
            <person name="Detter J.C."/>
            <person name="Han C."/>
            <person name="Larimer F."/>
            <person name="Land M."/>
            <person name="Hauser L."/>
            <person name="Kyrpides N."/>
            <person name="Ivanova N."/>
            <person name="Zhou J."/>
            <person name="Richardson P."/>
        </authorList>
    </citation>
    <scope>NUCLEOTIDE SEQUENCE [LARGE SCALE GENOMIC DNA]</scope>
    <source>
        <strain>ATCC 35319 / DSM 5812 / JCM 6584 / H10</strain>
    </source>
</reference>
<gene>
    <name evidence="1" type="primary">recR</name>
    <name type="ordered locus">Ccel_0244</name>
</gene>
<evidence type="ECO:0000255" key="1">
    <source>
        <dbReference type="HAMAP-Rule" id="MF_00017"/>
    </source>
</evidence>
<protein>
    <recommendedName>
        <fullName evidence="1">Recombination protein RecR</fullName>
    </recommendedName>
</protein>
<sequence length="199" mass="21925">MEYYAVPIAKLVEEFQKLPGIGHKSAQRLAFHVINLPMEKVQKLSESILEAKQKTRYCSVCSNLTDIDPCPLCSGTSRDKTVICVVQDPRDVVAMERTREFKGLYHVLHGAISPMQGIGPEEIRIKELITRLGSGDVKEVILATNPNVEGEATAMYISKLIKPLGVKATRIAHGIPVGGDLEYADEVTLAKALEGRREI</sequence>
<keyword id="KW-0227">DNA damage</keyword>
<keyword id="KW-0233">DNA recombination</keyword>
<keyword id="KW-0234">DNA repair</keyword>
<keyword id="KW-0479">Metal-binding</keyword>
<keyword id="KW-1185">Reference proteome</keyword>
<keyword id="KW-0862">Zinc</keyword>
<keyword id="KW-0863">Zinc-finger</keyword>
<comment type="function">
    <text evidence="1">May play a role in DNA repair. It seems to be involved in an RecBC-independent recombinational process of DNA repair. It may act with RecF and RecO.</text>
</comment>
<comment type="similarity">
    <text evidence="1">Belongs to the RecR family.</text>
</comment>
<organism>
    <name type="scientific">Ruminiclostridium cellulolyticum (strain ATCC 35319 / DSM 5812 / JCM 6584 / H10)</name>
    <name type="common">Clostridium cellulolyticum</name>
    <dbReference type="NCBI Taxonomy" id="394503"/>
    <lineage>
        <taxon>Bacteria</taxon>
        <taxon>Bacillati</taxon>
        <taxon>Bacillota</taxon>
        <taxon>Clostridia</taxon>
        <taxon>Eubacteriales</taxon>
        <taxon>Oscillospiraceae</taxon>
        <taxon>Ruminiclostridium</taxon>
    </lineage>
</organism>
<feature type="chain" id="PRO_1000195374" description="Recombination protein RecR">
    <location>
        <begin position="1"/>
        <end position="199"/>
    </location>
</feature>
<feature type="domain" description="Toprim" evidence="1">
    <location>
        <begin position="81"/>
        <end position="176"/>
    </location>
</feature>
<feature type="zinc finger region" description="C4-type" evidence="1">
    <location>
        <begin position="58"/>
        <end position="73"/>
    </location>
</feature>
<proteinExistence type="inferred from homology"/>
<dbReference type="EMBL" id="CP001348">
    <property type="protein sequence ID" value="ACL74631.1"/>
    <property type="molecule type" value="Genomic_DNA"/>
</dbReference>
<dbReference type="RefSeq" id="WP_012634696.1">
    <property type="nucleotide sequence ID" value="NC_011898.1"/>
</dbReference>
<dbReference type="SMR" id="B8I551"/>
<dbReference type="STRING" id="394503.Ccel_0244"/>
<dbReference type="KEGG" id="cce:Ccel_0244"/>
<dbReference type="eggNOG" id="COG0353">
    <property type="taxonomic scope" value="Bacteria"/>
</dbReference>
<dbReference type="HOGENOM" id="CLU_060739_1_0_9"/>
<dbReference type="OrthoDB" id="9802672at2"/>
<dbReference type="Proteomes" id="UP000001349">
    <property type="component" value="Chromosome"/>
</dbReference>
<dbReference type="GO" id="GO:0003677">
    <property type="term" value="F:DNA binding"/>
    <property type="evidence" value="ECO:0007669"/>
    <property type="project" value="UniProtKB-UniRule"/>
</dbReference>
<dbReference type="GO" id="GO:0008270">
    <property type="term" value="F:zinc ion binding"/>
    <property type="evidence" value="ECO:0007669"/>
    <property type="project" value="UniProtKB-KW"/>
</dbReference>
<dbReference type="GO" id="GO:0006310">
    <property type="term" value="P:DNA recombination"/>
    <property type="evidence" value="ECO:0007669"/>
    <property type="project" value="UniProtKB-UniRule"/>
</dbReference>
<dbReference type="GO" id="GO:0006281">
    <property type="term" value="P:DNA repair"/>
    <property type="evidence" value="ECO:0007669"/>
    <property type="project" value="UniProtKB-UniRule"/>
</dbReference>
<dbReference type="CDD" id="cd01025">
    <property type="entry name" value="TOPRIM_recR"/>
    <property type="match status" value="1"/>
</dbReference>
<dbReference type="Gene3D" id="3.30.60.80">
    <property type="match status" value="1"/>
</dbReference>
<dbReference type="Gene3D" id="3.40.1360.10">
    <property type="match status" value="1"/>
</dbReference>
<dbReference type="Gene3D" id="6.10.250.240">
    <property type="match status" value="1"/>
</dbReference>
<dbReference type="Gene3D" id="1.10.8.420">
    <property type="entry name" value="RecR Domain 1"/>
    <property type="match status" value="1"/>
</dbReference>
<dbReference type="HAMAP" id="MF_00017">
    <property type="entry name" value="RecR"/>
    <property type="match status" value="1"/>
</dbReference>
<dbReference type="InterPro" id="IPR000093">
    <property type="entry name" value="DNA_Rcmb_RecR"/>
</dbReference>
<dbReference type="InterPro" id="IPR023627">
    <property type="entry name" value="Rcmb_RecR"/>
</dbReference>
<dbReference type="InterPro" id="IPR015967">
    <property type="entry name" value="Rcmb_RecR_Znf"/>
</dbReference>
<dbReference type="InterPro" id="IPR006171">
    <property type="entry name" value="TOPRIM_dom"/>
</dbReference>
<dbReference type="InterPro" id="IPR034137">
    <property type="entry name" value="TOPRIM_RecR"/>
</dbReference>
<dbReference type="NCBIfam" id="TIGR00615">
    <property type="entry name" value="recR"/>
    <property type="match status" value="1"/>
</dbReference>
<dbReference type="PANTHER" id="PTHR30446">
    <property type="entry name" value="RECOMBINATION PROTEIN RECR"/>
    <property type="match status" value="1"/>
</dbReference>
<dbReference type="PANTHER" id="PTHR30446:SF0">
    <property type="entry name" value="RECOMBINATION PROTEIN RECR"/>
    <property type="match status" value="1"/>
</dbReference>
<dbReference type="Pfam" id="PF21175">
    <property type="entry name" value="RecR_C"/>
    <property type="match status" value="1"/>
</dbReference>
<dbReference type="Pfam" id="PF21176">
    <property type="entry name" value="RecR_HhH"/>
    <property type="match status" value="1"/>
</dbReference>
<dbReference type="Pfam" id="PF02132">
    <property type="entry name" value="RecR_ZnF"/>
    <property type="match status" value="1"/>
</dbReference>
<dbReference type="Pfam" id="PF13662">
    <property type="entry name" value="Toprim_4"/>
    <property type="match status" value="1"/>
</dbReference>
<dbReference type="SMART" id="SM00493">
    <property type="entry name" value="TOPRIM"/>
    <property type="match status" value="1"/>
</dbReference>
<dbReference type="SUPFAM" id="SSF111304">
    <property type="entry name" value="Recombination protein RecR"/>
    <property type="match status" value="1"/>
</dbReference>
<dbReference type="PROSITE" id="PS01300">
    <property type="entry name" value="RECR"/>
    <property type="match status" value="1"/>
</dbReference>
<dbReference type="PROSITE" id="PS50880">
    <property type="entry name" value="TOPRIM"/>
    <property type="match status" value="1"/>
</dbReference>
<name>RECR_RUMCH</name>